<sequence>MKDCENHGHSRRKLIRRIFWSIIFVLFIIFLTILLIWAILQPSKPRFILQDATVYAFNVSGNPPNLLTSNFQITLSSRNPNNKIGIYYDRLDVYATYRSQQITFPTSIPPTYQGHKDVDIWSPFVYGTSVPIAPFNGVSLDTDKDNGVVLLIIRADGRVRWKVGTFITGKYHLHVKCPAYINFGNKANGVIVGDNAVKYTFTTSCSVSV</sequence>
<reference key="1">
    <citation type="journal article" date="2000" name="Plant Physiol. Biochem.">
        <title>A gene family in Arabidopsis thaliana with sequence similarity to NDR1 and HIN1.</title>
        <authorList>
            <person name="Doermann P."/>
            <person name="Gopalan S."/>
            <person name="He S.Y."/>
            <person name="Benning C."/>
        </authorList>
    </citation>
    <scope>NUCLEOTIDE SEQUENCE [MRNA]</scope>
    <scope>GENE FAMILY</scope>
    <scope>NOMENCLATURE</scope>
</reference>
<reference key="2">
    <citation type="journal article" date="2000" name="Nature">
        <title>Sequence and analysis of chromosome 3 of the plant Arabidopsis thaliana.</title>
        <authorList>
            <person name="Salanoubat M."/>
            <person name="Lemcke K."/>
            <person name="Rieger M."/>
            <person name="Ansorge W."/>
            <person name="Unseld M."/>
            <person name="Fartmann B."/>
            <person name="Valle G."/>
            <person name="Bloecker H."/>
            <person name="Perez-Alonso M."/>
            <person name="Obermaier B."/>
            <person name="Delseny M."/>
            <person name="Boutry M."/>
            <person name="Grivell L.A."/>
            <person name="Mache R."/>
            <person name="Puigdomenech P."/>
            <person name="De Simone V."/>
            <person name="Choisne N."/>
            <person name="Artiguenave F."/>
            <person name="Robert C."/>
            <person name="Brottier P."/>
            <person name="Wincker P."/>
            <person name="Cattolico L."/>
            <person name="Weissenbach J."/>
            <person name="Saurin W."/>
            <person name="Quetier F."/>
            <person name="Schaefer M."/>
            <person name="Mueller-Auer S."/>
            <person name="Gabel C."/>
            <person name="Fuchs M."/>
            <person name="Benes V."/>
            <person name="Wurmbach E."/>
            <person name="Drzonek H."/>
            <person name="Erfle H."/>
            <person name="Jordan N."/>
            <person name="Bangert S."/>
            <person name="Wiedelmann R."/>
            <person name="Kranz H."/>
            <person name="Voss H."/>
            <person name="Holland R."/>
            <person name="Brandt P."/>
            <person name="Nyakatura G."/>
            <person name="Vezzi A."/>
            <person name="D'Angelo M."/>
            <person name="Pallavicini A."/>
            <person name="Toppo S."/>
            <person name="Simionati B."/>
            <person name="Conrad A."/>
            <person name="Hornischer K."/>
            <person name="Kauer G."/>
            <person name="Loehnert T.-H."/>
            <person name="Nordsiek G."/>
            <person name="Reichelt J."/>
            <person name="Scharfe M."/>
            <person name="Schoen O."/>
            <person name="Bargues M."/>
            <person name="Terol J."/>
            <person name="Climent J."/>
            <person name="Navarro P."/>
            <person name="Collado C."/>
            <person name="Perez-Perez A."/>
            <person name="Ottenwaelder B."/>
            <person name="Duchemin D."/>
            <person name="Cooke R."/>
            <person name="Laudie M."/>
            <person name="Berger-Llauro C."/>
            <person name="Purnelle B."/>
            <person name="Masuy D."/>
            <person name="de Haan M."/>
            <person name="Maarse A.C."/>
            <person name="Alcaraz J.-P."/>
            <person name="Cottet A."/>
            <person name="Casacuberta E."/>
            <person name="Monfort A."/>
            <person name="Argiriou A."/>
            <person name="Flores M."/>
            <person name="Liguori R."/>
            <person name="Vitale D."/>
            <person name="Mannhaupt G."/>
            <person name="Haase D."/>
            <person name="Schoof H."/>
            <person name="Rudd S."/>
            <person name="Zaccaria P."/>
            <person name="Mewes H.-W."/>
            <person name="Mayer K.F.X."/>
            <person name="Kaul S."/>
            <person name="Town C.D."/>
            <person name="Koo H.L."/>
            <person name="Tallon L.J."/>
            <person name="Jenkins J."/>
            <person name="Rooney T."/>
            <person name="Rizzo M."/>
            <person name="Walts A."/>
            <person name="Utterback T."/>
            <person name="Fujii C.Y."/>
            <person name="Shea T.P."/>
            <person name="Creasy T.H."/>
            <person name="Haas B."/>
            <person name="Maiti R."/>
            <person name="Wu D."/>
            <person name="Peterson J."/>
            <person name="Van Aken S."/>
            <person name="Pai G."/>
            <person name="Militscher J."/>
            <person name="Sellers P."/>
            <person name="Gill J.E."/>
            <person name="Feldblyum T.V."/>
            <person name="Preuss D."/>
            <person name="Lin X."/>
            <person name="Nierman W.C."/>
            <person name="Salzberg S.L."/>
            <person name="White O."/>
            <person name="Venter J.C."/>
            <person name="Fraser C.M."/>
            <person name="Kaneko T."/>
            <person name="Nakamura Y."/>
            <person name="Sato S."/>
            <person name="Kato T."/>
            <person name="Asamizu E."/>
            <person name="Sasamoto S."/>
            <person name="Kimura T."/>
            <person name="Idesawa K."/>
            <person name="Kawashima K."/>
            <person name="Kishida Y."/>
            <person name="Kiyokawa C."/>
            <person name="Kohara M."/>
            <person name="Matsumoto M."/>
            <person name="Matsuno A."/>
            <person name="Muraki A."/>
            <person name="Nakayama S."/>
            <person name="Nakazaki N."/>
            <person name="Shinpo S."/>
            <person name="Takeuchi C."/>
            <person name="Wada T."/>
            <person name="Watanabe A."/>
            <person name="Yamada M."/>
            <person name="Yasuda M."/>
            <person name="Tabata S."/>
        </authorList>
    </citation>
    <scope>NUCLEOTIDE SEQUENCE [LARGE SCALE GENOMIC DNA]</scope>
    <source>
        <strain>cv. Columbia</strain>
    </source>
</reference>
<reference key="3">
    <citation type="journal article" date="2017" name="Plant J.">
        <title>Araport11: a complete reannotation of the Arabidopsis thaliana reference genome.</title>
        <authorList>
            <person name="Cheng C.Y."/>
            <person name="Krishnakumar V."/>
            <person name="Chan A.P."/>
            <person name="Thibaud-Nissen F."/>
            <person name="Schobel S."/>
            <person name="Town C.D."/>
        </authorList>
    </citation>
    <scope>GENOME REANNOTATION</scope>
    <source>
        <strain>cv. Columbia</strain>
    </source>
</reference>
<reference key="4">
    <citation type="journal article" date="2003" name="Science">
        <title>Empirical analysis of transcriptional activity in the Arabidopsis genome.</title>
        <authorList>
            <person name="Yamada K."/>
            <person name="Lim J."/>
            <person name="Dale J.M."/>
            <person name="Chen H."/>
            <person name="Shinn P."/>
            <person name="Palm C.J."/>
            <person name="Southwick A.M."/>
            <person name="Wu H.C."/>
            <person name="Kim C.J."/>
            <person name="Nguyen M."/>
            <person name="Pham P.K."/>
            <person name="Cheuk R.F."/>
            <person name="Karlin-Newmann G."/>
            <person name="Liu S.X."/>
            <person name="Lam B."/>
            <person name="Sakano H."/>
            <person name="Wu T."/>
            <person name="Yu G."/>
            <person name="Miranda M."/>
            <person name="Quach H.L."/>
            <person name="Tripp M."/>
            <person name="Chang C.H."/>
            <person name="Lee J.M."/>
            <person name="Toriumi M.J."/>
            <person name="Chan M.M."/>
            <person name="Tang C.C."/>
            <person name="Onodera C.S."/>
            <person name="Deng J.M."/>
            <person name="Akiyama K."/>
            <person name="Ansari Y."/>
            <person name="Arakawa T."/>
            <person name="Banh J."/>
            <person name="Banno F."/>
            <person name="Bowser L."/>
            <person name="Brooks S.Y."/>
            <person name="Carninci P."/>
            <person name="Chao Q."/>
            <person name="Choy N."/>
            <person name="Enju A."/>
            <person name="Goldsmith A.D."/>
            <person name="Gurjal M."/>
            <person name="Hansen N.F."/>
            <person name="Hayashizaki Y."/>
            <person name="Johnson-Hopson C."/>
            <person name="Hsuan V.W."/>
            <person name="Iida K."/>
            <person name="Karnes M."/>
            <person name="Khan S."/>
            <person name="Koesema E."/>
            <person name="Ishida J."/>
            <person name="Jiang P.X."/>
            <person name="Jones T."/>
            <person name="Kawai J."/>
            <person name="Kamiya A."/>
            <person name="Meyers C."/>
            <person name="Nakajima M."/>
            <person name="Narusaka M."/>
            <person name="Seki M."/>
            <person name="Sakurai T."/>
            <person name="Satou M."/>
            <person name="Tamse R."/>
            <person name="Vaysberg M."/>
            <person name="Wallender E.K."/>
            <person name="Wong C."/>
            <person name="Yamamura Y."/>
            <person name="Yuan S."/>
            <person name="Shinozaki K."/>
            <person name="Davis R.W."/>
            <person name="Theologis A."/>
            <person name="Ecker J.R."/>
        </authorList>
    </citation>
    <scope>NUCLEOTIDE SEQUENCE [LARGE SCALE MRNA]</scope>
    <source>
        <strain>cv. Columbia</strain>
    </source>
</reference>
<reference key="5">
    <citation type="submission" date="2005-01" db="EMBL/GenBank/DDBJ databases">
        <title>Arabidopsis ORF clones.</title>
        <authorList>
            <person name="Kim C.J."/>
            <person name="Chen H."/>
            <person name="Cheuk R.F."/>
            <person name="Shinn P."/>
            <person name="Ecker J.R."/>
        </authorList>
    </citation>
    <scope>NUCLEOTIDE SEQUENCE [LARGE SCALE MRNA]</scope>
    <source>
        <strain>cv. Columbia</strain>
    </source>
</reference>
<reference key="6">
    <citation type="submission" date="2002-03" db="EMBL/GenBank/DDBJ databases">
        <title>Full-length cDNA from Arabidopsis thaliana.</title>
        <authorList>
            <person name="Brover V.V."/>
            <person name="Troukhan M.E."/>
            <person name="Alexandrov N.A."/>
            <person name="Lu Y.-P."/>
            <person name="Flavell R.B."/>
            <person name="Feldmann K.A."/>
        </authorList>
    </citation>
    <scope>NUCLEOTIDE SEQUENCE [LARGE SCALE MRNA]</scope>
</reference>
<reference key="7">
    <citation type="journal article" date="2004" name="Planta">
        <title>Up-regulation of Arabidopsis thaliana NHL10 in the hypersensitive response to Cucumber mosaic virus infection and in senescing leaves is controlled by signalling pathways that differ in salicylate involvement.</title>
        <authorList>
            <person name="Zheng M.S."/>
            <person name="Takahashi H."/>
            <person name="Miyazaki A."/>
            <person name="Hamamoto H."/>
            <person name="Shah J."/>
            <person name="Yamaguchi I."/>
            <person name="Kusano T."/>
        </authorList>
    </citation>
    <scope>TISSUE SPECIFICITY</scope>
    <scope>INDUCTION BY CMV</scope>
</reference>
<dbReference type="EMBL" id="AF264697">
    <property type="protein sequence ID" value="AAF88021.1"/>
    <property type="molecule type" value="mRNA"/>
</dbReference>
<dbReference type="EMBL" id="AC009918">
    <property type="protein sequence ID" value="AAF02134.1"/>
    <property type="molecule type" value="Genomic_DNA"/>
</dbReference>
<dbReference type="EMBL" id="CP002686">
    <property type="protein sequence ID" value="AEE75080.1"/>
    <property type="molecule type" value="Genomic_DNA"/>
</dbReference>
<dbReference type="EMBL" id="BT003850">
    <property type="protein sequence ID" value="AAO41900.1"/>
    <property type="molecule type" value="mRNA"/>
</dbReference>
<dbReference type="EMBL" id="BT020319">
    <property type="protein sequence ID" value="AAV85674.1"/>
    <property type="molecule type" value="mRNA"/>
</dbReference>
<dbReference type="EMBL" id="BT020551">
    <property type="protein sequence ID" value="AAW70397.1"/>
    <property type="molecule type" value="mRNA"/>
</dbReference>
<dbReference type="EMBL" id="AY088586">
    <property type="protein sequence ID" value="AAM66116.1"/>
    <property type="molecule type" value="mRNA"/>
</dbReference>
<dbReference type="RefSeq" id="NP_566396.1">
    <property type="nucleotide sequence ID" value="NM_111998.3"/>
</dbReference>
<dbReference type="FunCoup" id="Q9SRN0">
    <property type="interactions" value="359"/>
</dbReference>
<dbReference type="IntAct" id="Q9SRN0">
    <property type="interactions" value="35"/>
</dbReference>
<dbReference type="STRING" id="3702.Q9SRN0"/>
<dbReference type="GlyCosmos" id="Q9SRN0">
    <property type="glycosylation" value="1 site, No reported glycans"/>
</dbReference>
<dbReference type="GlyGen" id="Q9SRN0">
    <property type="glycosylation" value="1 site"/>
</dbReference>
<dbReference type="iPTMnet" id="Q9SRN0"/>
<dbReference type="PaxDb" id="3702-AT3G11660.1"/>
<dbReference type="ProteomicsDB" id="236824"/>
<dbReference type="EnsemblPlants" id="AT3G11660.1">
    <property type="protein sequence ID" value="AT3G11660.1"/>
    <property type="gene ID" value="AT3G11660"/>
</dbReference>
<dbReference type="GeneID" id="820338"/>
<dbReference type="Gramene" id="AT3G11660.1">
    <property type="protein sequence ID" value="AT3G11660.1"/>
    <property type="gene ID" value="AT3G11660"/>
</dbReference>
<dbReference type="KEGG" id="ath:AT3G11660"/>
<dbReference type="Araport" id="AT3G11660"/>
<dbReference type="TAIR" id="AT3G11660">
    <property type="gene designation" value="NHL1"/>
</dbReference>
<dbReference type="eggNOG" id="ENOG502QSD7">
    <property type="taxonomic scope" value="Eukaryota"/>
</dbReference>
<dbReference type="HOGENOM" id="CLU_051752_1_1_1"/>
<dbReference type="InParanoid" id="Q9SRN0"/>
<dbReference type="OMA" id="HEEINVW"/>
<dbReference type="OrthoDB" id="1426517at2759"/>
<dbReference type="PhylomeDB" id="Q9SRN0"/>
<dbReference type="PRO" id="PR:Q9SRN0"/>
<dbReference type="Proteomes" id="UP000006548">
    <property type="component" value="Chromosome 3"/>
</dbReference>
<dbReference type="ExpressionAtlas" id="Q9SRN0">
    <property type="expression patterns" value="baseline and differential"/>
</dbReference>
<dbReference type="GO" id="GO:0005886">
    <property type="term" value="C:plasma membrane"/>
    <property type="evidence" value="ECO:0007669"/>
    <property type="project" value="UniProtKB-SubCell"/>
</dbReference>
<dbReference type="GO" id="GO:0051607">
    <property type="term" value="P:defense response to virus"/>
    <property type="evidence" value="ECO:0000270"/>
    <property type="project" value="TAIR"/>
</dbReference>
<dbReference type="InterPro" id="IPR004864">
    <property type="entry name" value="LEA_2"/>
</dbReference>
<dbReference type="InterPro" id="IPR044839">
    <property type="entry name" value="NDR1-like"/>
</dbReference>
<dbReference type="PANTHER" id="PTHR31415:SF176">
    <property type="entry name" value="LATE EMBRYOGENESIS ABUNDANT (LEA) HYDROXYPROLINE-RICH GLYCOPROTEIN FAMILY PROTEIN-RELATED"/>
    <property type="match status" value="1"/>
</dbReference>
<dbReference type="PANTHER" id="PTHR31415">
    <property type="entry name" value="OS05G0367900 PROTEIN"/>
    <property type="match status" value="1"/>
</dbReference>
<dbReference type="Pfam" id="PF03168">
    <property type="entry name" value="LEA_2"/>
    <property type="match status" value="1"/>
</dbReference>
<keyword id="KW-1003">Cell membrane</keyword>
<keyword id="KW-0325">Glycoprotein</keyword>
<keyword id="KW-0472">Membrane</keyword>
<keyword id="KW-0611">Plant defense</keyword>
<keyword id="KW-1185">Reference proteome</keyword>
<keyword id="KW-0812">Transmembrane</keyword>
<keyword id="KW-1133">Transmembrane helix</keyword>
<comment type="function">
    <text evidence="2">May play a role in plant immunity.</text>
</comment>
<comment type="subcellular location">
    <subcellularLocation>
        <location evidence="1">Cell membrane</location>
        <topology evidence="3">Single-pass membrane protein</topology>
    </subcellularLocation>
</comment>
<comment type="tissue specificity">
    <text evidence="5">Expressed in rosette leaves, cauline leaves, stems, and siliques, and at lower levels in roots and flowers.</text>
</comment>
<comment type="induction">
    <text evidence="5">Induced by infection with the cucumber mosaic virus (CMV-Y and CMV-B2 strains).</text>
</comment>
<name>NHL1_ARATH</name>
<gene>
    <name evidence="6" type="primary">NHL1</name>
    <name evidence="8" type="ordered locus">At3g11660</name>
    <name evidence="9" type="ORF">T19F11.6</name>
</gene>
<evidence type="ECO:0000250" key="1">
    <source>
        <dbReference type="UniProtKB" id="Q9FNH6"/>
    </source>
</evidence>
<evidence type="ECO:0000250" key="2">
    <source>
        <dbReference type="UniProtKB" id="Q9ZVD2"/>
    </source>
</evidence>
<evidence type="ECO:0000255" key="3"/>
<evidence type="ECO:0000255" key="4">
    <source>
        <dbReference type="PROSITE-ProRule" id="PRU00498"/>
    </source>
</evidence>
<evidence type="ECO:0000269" key="5">
    <source>
    </source>
</evidence>
<evidence type="ECO:0000303" key="6">
    <source ref="1"/>
</evidence>
<evidence type="ECO:0000305" key="7"/>
<evidence type="ECO:0000312" key="8">
    <source>
        <dbReference type="Araport" id="AT3G11660"/>
    </source>
</evidence>
<evidence type="ECO:0000312" key="9">
    <source>
        <dbReference type="EMBL" id="AAF02134.1"/>
    </source>
</evidence>
<organism>
    <name type="scientific">Arabidopsis thaliana</name>
    <name type="common">Mouse-ear cress</name>
    <dbReference type="NCBI Taxonomy" id="3702"/>
    <lineage>
        <taxon>Eukaryota</taxon>
        <taxon>Viridiplantae</taxon>
        <taxon>Streptophyta</taxon>
        <taxon>Embryophyta</taxon>
        <taxon>Tracheophyta</taxon>
        <taxon>Spermatophyta</taxon>
        <taxon>Magnoliopsida</taxon>
        <taxon>eudicotyledons</taxon>
        <taxon>Gunneridae</taxon>
        <taxon>Pentapetalae</taxon>
        <taxon>rosids</taxon>
        <taxon>malvids</taxon>
        <taxon>Brassicales</taxon>
        <taxon>Brassicaceae</taxon>
        <taxon>Camelineae</taxon>
        <taxon>Arabidopsis</taxon>
    </lineage>
</organism>
<proteinExistence type="evidence at transcript level"/>
<protein>
    <recommendedName>
        <fullName evidence="6">NDR1/HIN1-like protein 1</fullName>
    </recommendedName>
</protein>
<accession>Q9SRN0</accession>
<accession>Q84WG2</accession>
<feature type="chain" id="PRO_0000438808" description="NDR1/HIN1-like protein 1">
    <location>
        <begin position="1"/>
        <end position="209"/>
    </location>
</feature>
<feature type="transmembrane region" description="Helical" evidence="3">
    <location>
        <begin position="18"/>
        <end position="38"/>
    </location>
</feature>
<feature type="glycosylation site" description="N-linked (GlcNAc...) asparagine" evidence="4">
    <location>
        <position position="58"/>
    </location>
</feature>
<feature type="sequence conflict" description="In Ref. 4; AAO41900." evidence="7" ref="4">
    <original>L</original>
    <variation>I</variation>
    <location>
        <position position="66"/>
    </location>
</feature>